<name>MTD_METM7</name>
<organism>
    <name type="scientific">Methanococcus maripaludis (strain C7 / ATCC BAA-1331)</name>
    <dbReference type="NCBI Taxonomy" id="426368"/>
    <lineage>
        <taxon>Archaea</taxon>
        <taxon>Methanobacteriati</taxon>
        <taxon>Methanobacteriota</taxon>
        <taxon>Methanomada group</taxon>
        <taxon>Methanococci</taxon>
        <taxon>Methanococcales</taxon>
        <taxon>Methanococcaceae</taxon>
        <taxon>Methanococcus</taxon>
    </lineage>
</organism>
<accession>A6VJ05</accession>
<proteinExistence type="inferred from homology"/>
<keyword id="KW-0484">Methanogenesis</keyword>
<keyword id="KW-0554">One-carbon metabolism</keyword>
<keyword id="KW-0560">Oxidoreductase</keyword>
<feature type="chain" id="PRO_1000007672" description="F420-dependent methylenetetrahydromethanopterin dehydrogenase">
    <location>
        <begin position="1"/>
        <end position="277"/>
    </location>
</feature>
<sequence>MVVKIGILKCGNIGMSPVVDLCLDERADRNDIDVRVLGSGAKMGPEQVEEVAKKMVEEVKPDFIVYIGPNPAAPGPKKAREILSAGGIPTVIIGDAPGIKDKDAMAEEGLGYVLIKCDPMIGARRQFLDPVEMAMFNADVIRVLAGTGALRVVQNAIDDMVFAVEEGKEIPLPKIVITEQKAVDAMDFANPYAKAKAMAAFVMAEKVADIDVKGCFMTKEMEKYIPIVASAHEAIRYAAKLVDEARELEKATDAVSRKPHAGEGKILNKCKLMAKPE</sequence>
<comment type="function">
    <text evidence="1">Catalyzes the reversible reduction of methenyl-H(4)MPT(+) to methylene-H(4)MPT.</text>
</comment>
<comment type="catalytic activity">
    <reaction evidence="1">
        <text>5,10-methylenetetrahydromethanopterin + oxidized coenzyme F420-(gamma-L-Glu)(n) + 2 H(+) = 5,10-methenyl-5,6,7,8-tetrahydromethanopterin + reduced coenzyme F420-(gamma-L-Glu)(n)</text>
        <dbReference type="Rhea" id="RHEA:16721"/>
        <dbReference type="Rhea" id="RHEA-COMP:12939"/>
        <dbReference type="Rhea" id="RHEA-COMP:14378"/>
        <dbReference type="ChEBI" id="CHEBI:15378"/>
        <dbReference type="ChEBI" id="CHEBI:57818"/>
        <dbReference type="ChEBI" id="CHEBI:58337"/>
        <dbReference type="ChEBI" id="CHEBI:133980"/>
        <dbReference type="ChEBI" id="CHEBI:139511"/>
        <dbReference type="EC" id="1.5.98.1"/>
    </reaction>
</comment>
<comment type="pathway">
    <text evidence="1">One-carbon metabolism; methanogenesis from CO(2); 5,10-methylene-5,6,7,8-tetrahydromethanopterin from 5,10-methenyl-5,6,7,8-tetrahydromethanopterin (coenzyme F420 route): step 1/1.</text>
</comment>
<comment type="similarity">
    <text evidence="1">Belongs to the MTD family.</text>
</comment>
<reference key="1">
    <citation type="submission" date="2007-06" db="EMBL/GenBank/DDBJ databases">
        <title>Complete sequence of Methanococcus maripaludis C7.</title>
        <authorList>
            <consortium name="US DOE Joint Genome Institute"/>
            <person name="Copeland A."/>
            <person name="Lucas S."/>
            <person name="Lapidus A."/>
            <person name="Barry K."/>
            <person name="Glavina del Rio T."/>
            <person name="Dalin E."/>
            <person name="Tice H."/>
            <person name="Pitluck S."/>
            <person name="Clum A."/>
            <person name="Schmutz J."/>
            <person name="Larimer F."/>
            <person name="Land M."/>
            <person name="Hauser L."/>
            <person name="Kyrpides N."/>
            <person name="Anderson I."/>
            <person name="Sieprawska-Lupa M."/>
            <person name="Whitman W.B."/>
            <person name="Richardson P."/>
        </authorList>
    </citation>
    <scope>NUCLEOTIDE SEQUENCE [LARGE SCALE GENOMIC DNA]</scope>
    <source>
        <strain>C7 / ATCC BAA-1331</strain>
    </source>
</reference>
<gene>
    <name evidence="1" type="primary">mtd</name>
    <name type="ordered locus">MmarC7_1368</name>
</gene>
<evidence type="ECO:0000255" key="1">
    <source>
        <dbReference type="HAMAP-Rule" id="MF_00058"/>
    </source>
</evidence>
<protein>
    <recommendedName>
        <fullName evidence="1">F420-dependent methylenetetrahydromethanopterin dehydrogenase</fullName>
        <shortName evidence="1">MTD</shortName>
        <ecNumber evidence="1">1.5.98.1</ecNumber>
    </recommendedName>
    <alternativeName>
        <fullName evidence="1">Coenzyme F420-dependent N5,N10-methylenetetrahydromethanopterin dehydrogenase</fullName>
    </alternativeName>
</protein>
<dbReference type="EC" id="1.5.98.1" evidence="1"/>
<dbReference type="EMBL" id="CP000745">
    <property type="protein sequence ID" value="ABR66431.1"/>
    <property type="molecule type" value="Genomic_DNA"/>
</dbReference>
<dbReference type="SMR" id="A6VJ05"/>
<dbReference type="STRING" id="426368.MmarC7_1368"/>
<dbReference type="KEGG" id="mmz:MmarC7_1368"/>
<dbReference type="eggNOG" id="arCOG04382">
    <property type="taxonomic scope" value="Archaea"/>
</dbReference>
<dbReference type="HOGENOM" id="CLU_1006890_0_0_2"/>
<dbReference type="OrthoDB" id="49844at2157"/>
<dbReference type="UniPathway" id="UPA00640">
    <property type="reaction ID" value="UER00695"/>
</dbReference>
<dbReference type="GO" id="GO:0008901">
    <property type="term" value="F:ferredoxin hydrogenase activity"/>
    <property type="evidence" value="ECO:0007669"/>
    <property type="project" value="InterPro"/>
</dbReference>
<dbReference type="GO" id="GO:0030268">
    <property type="term" value="F:methylenetetrahydromethanopterin dehydrogenase activity"/>
    <property type="evidence" value="ECO:0007669"/>
    <property type="project" value="UniProtKB-UniRule"/>
</dbReference>
<dbReference type="GO" id="GO:0019386">
    <property type="term" value="P:methanogenesis, from carbon dioxide"/>
    <property type="evidence" value="ECO:0007669"/>
    <property type="project" value="UniProtKB-UniRule"/>
</dbReference>
<dbReference type="GO" id="GO:0006730">
    <property type="term" value="P:one-carbon metabolic process"/>
    <property type="evidence" value="ECO:0007669"/>
    <property type="project" value="UniProtKB-UniRule"/>
</dbReference>
<dbReference type="Gene3D" id="6.10.140.120">
    <property type="match status" value="1"/>
</dbReference>
<dbReference type="Gene3D" id="3.40.50.10830">
    <property type="entry name" value="F420-dependent methylenetetrahydromethanopterin dehydrogenase (MTD)"/>
    <property type="match status" value="1"/>
</dbReference>
<dbReference type="HAMAP" id="MF_00058">
    <property type="entry name" value="MTD"/>
    <property type="match status" value="1"/>
</dbReference>
<dbReference type="InterPro" id="IPR002844">
    <property type="entry name" value="MTD"/>
</dbReference>
<dbReference type="InterPro" id="IPR036080">
    <property type="entry name" value="MTD_sf"/>
</dbReference>
<dbReference type="NCBIfam" id="NF002162">
    <property type="entry name" value="PRK00994.1"/>
    <property type="match status" value="1"/>
</dbReference>
<dbReference type="Pfam" id="PF01993">
    <property type="entry name" value="MTD"/>
    <property type="match status" value="1"/>
</dbReference>
<dbReference type="PIRSF" id="PIRSF005627">
    <property type="entry name" value="MTD"/>
    <property type="match status" value="1"/>
</dbReference>
<dbReference type="SUPFAM" id="SSF102324">
    <property type="entry name" value="F420-dependent methylenetetrahydromethanopterin dehydrogenase (MTD)"/>
    <property type="match status" value="1"/>
</dbReference>